<comment type="function">
    <text evidence="1">This protein is an auxiliary protein of DNA polymerase delta and is involved in the control of eukaryotic DNA replication by increasing the polymerase's processibility during elongation of the leading strand.</text>
</comment>
<comment type="subunit">
    <text evidence="3 4 5">Homo- and heterotrimer. Interacts with POLH, ATXR5 and ATXR6.</text>
</comment>
<comment type="interaction">
    <interactant intactId="EBI-1810458">
        <id>Q9M7Q7</id>
    </interactant>
    <interactant intactId="EBI-1810451">
        <id>Q8H2D5</id>
        <label>POLH</label>
    </interactant>
    <organismsDiffer>false</organismsDiffer>
    <experiments>2</experiments>
</comment>
<comment type="subcellular location">
    <subcellularLocation>
        <location>Nucleus</location>
    </subcellularLocation>
</comment>
<comment type="similarity">
    <text evidence="6">Belongs to the PCNA family.</text>
</comment>
<evidence type="ECO:0000250" key="1"/>
<evidence type="ECO:0000255" key="2"/>
<evidence type="ECO:0000269" key="3">
    <source>
    </source>
</evidence>
<evidence type="ECO:0000269" key="4">
    <source>
    </source>
</evidence>
<evidence type="ECO:0000269" key="5">
    <source>
    </source>
</evidence>
<evidence type="ECO:0000305" key="6"/>
<evidence type="ECO:0007829" key="7">
    <source>
        <dbReference type="PDB" id="2ZVV"/>
    </source>
</evidence>
<evidence type="ECO:0007829" key="8">
    <source>
        <dbReference type="PDB" id="6O09"/>
    </source>
</evidence>
<keyword id="KW-0002">3D-structure</keyword>
<keyword id="KW-0235">DNA replication</keyword>
<keyword id="KW-0238">DNA-binding</keyword>
<keyword id="KW-0539">Nucleus</keyword>
<keyword id="KW-1185">Reference proteome</keyword>
<sequence>MLELRLVQGSLLKKVLESIKDLVNDANFDCSSTGFSLQAMDSSHVALVSLLLRSEGFEHYRCDRNLSMGMNLGNMSKMLKCAGNDDIITIKADDGGDTVTFMFESPTQDKIADFEMKLMDIDSEHLGIPDAEYHSIVRMPSNEFSRICKDLSSIGDTVVISVTKEGVKFSTAGDIGTANIVLRQNTTVDKPEDAIVIEMKEPVSLSFALRYMNSFTKATPLSDTVTISLSSELPVVVEYKVAEMGYIRYYLAPKIEEEEDTNP</sequence>
<organism>
    <name type="scientific">Arabidopsis thaliana</name>
    <name type="common">Mouse-ear cress</name>
    <dbReference type="NCBI Taxonomy" id="3702"/>
    <lineage>
        <taxon>Eukaryota</taxon>
        <taxon>Viridiplantae</taxon>
        <taxon>Streptophyta</taxon>
        <taxon>Embryophyta</taxon>
        <taxon>Tracheophyta</taxon>
        <taxon>Spermatophyta</taxon>
        <taxon>Magnoliopsida</taxon>
        <taxon>eudicotyledons</taxon>
        <taxon>Gunneridae</taxon>
        <taxon>Pentapetalae</taxon>
        <taxon>rosids</taxon>
        <taxon>malvids</taxon>
        <taxon>Brassicales</taxon>
        <taxon>Brassicaceae</taxon>
        <taxon>Camelineae</taxon>
        <taxon>Arabidopsis</taxon>
    </lineage>
</organism>
<reference key="1">
    <citation type="submission" date="1998-08" db="EMBL/GenBank/DDBJ databases">
        <title>Cloning and characterization of Arabidopsis proliferating cellular nuclear antigen (PCNA).</title>
        <authorList>
            <person name="Park S.C."/>
            <person name="Park E.H."/>
            <person name="Cho J.W."/>
        </authorList>
    </citation>
    <scope>NUCLEOTIDE SEQUENCE [MRNA]</scope>
</reference>
<reference key="2">
    <citation type="submission" date="2007-07" db="EMBL/GenBank/DDBJ databases">
        <authorList>
            <person name="Di Rubbo A."/>
            <person name="Vonarx E.J."/>
            <person name="Kunz B.A."/>
        </authorList>
    </citation>
    <scope>NUCLEOTIDE SEQUENCE [MRNA]</scope>
    <source>
        <strain>cv. Columbia</strain>
    </source>
</reference>
<reference key="3">
    <citation type="journal article" date="2000" name="Nature">
        <title>Sequence and analysis of chromosome 1 of the plant Arabidopsis thaliana.</title>
        <authorList>
            <person name="Theologis A."/>
            <person name="Ecker J.R."/>
            <person name="Palm C.J."/>
            <person name="Federspiel N.A."/>
            <person name="Kaul S."/>
            <person name="White O."/>
            <person name="Alonso J."/>
            <person name="Altafi H."/>
            <person name="Araujo R."/>
            <person name="Bowman C.L."/>
            <person name="Brooks S.Y."/>
            <person name="Buehler E."/>
            <person name="Chan A."/>
            <person name="Chao Q."/>
            <person name="Chen H."/>
            <person name="Cheuk R.F."/>
            <person name="Chin C.W."/>
            <person name="Chung M.K."/>
            <person name="Conn L."/>
            <person name="Conway A.B."/>
            <person name="Conway A.R."/>
            <person name="Creasy T.H."/>
            <person name="Dewar K."/>
            <person name="Dunn P."/>
            <person name="Etgu P."/>
            <person name="Feldblyum T.V."/>
            <person name="Feng J.-D."/>
            <person name="Fong B."/>
            <person name="Fujii C.Y."/>
            <person name="Gill J.E."/>
            <person name="Goldsmith A.D."/>
            <person name="Haas B."/>
            <person name="Hansen N.F."/>
            <person name="Hughes B."/>
            <person name="Huizar L."/>
            <person name="Hunter J.L."/>
            <person name="Jenkins J."/>
            <person name="Johnson-Hopson C."/>
            <person name="Khan S."/>
            <person name="Khaykin E."/>
            <person name="Kim C.J."/>
            <person name="Koo H.L."/>
            <person name="Kremenetskaia I."/>
            <person name="Kurtz D.B."/>
            <person name="Kwan A."/>
            <person name="Lam B."/>
            <person name="Langin-Hooper S."/>
            <person name="Lee A."/>
            <person name="Lee J.M."/>
            <person name="Lenz C.A."/>
            <person name="Li J.H."/>
            <person name="Li Y.-P."/>
            <person name="Lin X."/>
            <person name="Liu S.X."/>
            <person name="Liu Z.A."/>
            <person name="Luros J.S."/>
            <person name="Maiti R."/>
            <person name="Marziali A."/>
            <person name="Militscher J."/>
            <person name="Miranda M."/>
            <person name="Nguyen M."/>
            <person name="Nierman W.C."/>
            <person name="Osborne B.I."/>
            <person name="Pai G."/>
            <person name="Peterson J."/>
            <person name="Pham P.K."/>
            <person name="Rizzo M."/>
            <person name="Rooney T."/>
            <person name="Rowley D."/>
            <person name="Sakano H."/>
            <person name="Salzberg S.L."/>
            <person name="Schwartz J.R."/>
            <person name="Shinn P."/>
            <person name="Southwick A.M."/>
            <person name="Sun H."/>
            <person name="Tallon L.J."/>
            <person name="Tambunga G."/>
            <person name="Toriumi M.J."/>
            <person name="Town C.D."/>
            <person name="Utterback T."/>
            <person name="Van Aken S."/>
            <person name="Vaysberg M."/>
            <person name="Vysotskaia V.S."/>
            <person name="Walker M."/>
            <person name="Wu D."/>
            <person name="Yu G."/>
            <person name="Fraser C.M."/>
            <person name="Venter J.C."/>
            <person name="Davis R.W."/>
        </authorList>
    </citation>
    <scope>NUCLEOTIDE SEQUENCE [LARGE SCALE GENOMIC DNA]</scope>
    <source>
        <strain>cv. Columbia</strain>
    </source>
</reference>
<reference key="4">
    <citation type="journal article" date="2017" name="Plant J.">
        <title>Araport11: a complete reannotation of the Arabidopsis thaliana reference genome.</title>
        <authorList>
            <person name="Cheng C.Y."/>
            <person name="Krishnakumar V."/>
            <person name="Chan A.P."/>
            <person name="Thibaud-Nissen F."/>
            <person name="Schobel S."/>
            <person name="Town C.D."/>
        </authorList>
    </citation>
    <scope>GENOME REANNOTATION</scope>
    <source>
        <strain>cv. Columbia</strain>
    </source>
</reference>
<reference key="5">
    <citation type="journal article" date="2003" name="Science">
        <title>Empirical analysis of transcriptional activity in the Arabidopsis genome.</title>
        <authorList>
            <person name="Yamada K."/>
            <person name="Lim J."/>
            <person name="Dale J.M."/>
            <person name="Chen H."/>
            <person name="Shinn P."/>
            <person name="Palm C.J."/>
            <person name="Southwick A.M."/>
            <person name="Wu H.C."/>
            <person name="Kim C.J."/>
            <person name="Nguyen M."/>
            <person name="Pham P.K."/>
            <person name="Cheuk R.F."/>
            <person name="Karlin-Newmann G."/>
            <person name="Liu S.X."/>
            <person name="Lam B."/>
            <person name="Sakano H."/>
            <person name="Wu T."/>
            <person name="Yu G."/>
            <person name="Miranda M."/>
            <person name="Quach H.L."/>
            <person name="Tripp M."/>
            <person name="Chang C.H."/>
            <person name="Lee J.M."/>
            <person name="Toriumi M.J."/>
            <person name="Chan M.M."/>
            <person name="Tang C.C."/>
            <person name="Onodera C.S."/>
            <person name="Deng J.M."/>
            <person name="Akiyama K."/>
            <person name="Ansari Y."/>
            <person name="Arakawa T."/>
            <person name="Banh J."/>
            <person name="Banno F."/>
            <person name="Bowser L."/>
            <person name="Brooks S.Y."/>
            <person name="Carninci P."/>
            <person name="Chao Q."/>
            <person name="Choy N."/>
            <person name="Enju A."/>
            <person name="Goldsmith A.D."/>
            <person name="Gurjal M."/>
            <person name="Hansen N.F."/>
            <person name="Hayashizaki Y."/>
            <person name="Johnson-Hopson C."/>
            <person name="Hsuan V.W."/>
            <person name="Iida K."/>
            <person name="Karnes M."/>
            <person name="Khan S."/>
            <person name="Koesema E."/>
            <person name="Ishida J."/>
            <person name="Jiang P.X."/>
            <person name="Jones T."/>
            <person name="Kawai J."/>
            <person name="Kamiya A."/>
            <person name="Meyers C."/>
            <person name="Nakajima M."/>
            <person name="Narusaka M."/>
            <person name="Seki M."/>
            <person name="Sakurai T."/>
            <person name="Satou M."/>
            <person name="Tamse R."/>
            <person name="Vaysberg M."/>
            <person name="Wallender E.K."/>
            <person name="Wong C."/>
            <person name="Yamamura Y."/>
            <person name="Yuan S."/>
            <person name="Shinozaki K."/>
            <person name="Davis R.W."/>
            <person name="Theologis A."/>
            <person name="Ecker J.R."/>
        </authorList>
    </citation>
    <scope>NUCLEOTIDE SEQUENCE [LARGE SCALE MRNA]</scope>
    <source>
        <strain>cv. Columbia</strain>
    </source>
</reference>
<reference key="6">
    <citation type="submission" date="2002-03" db="EMBL/GenBank/DDBJ databases">
        <title>Full-length cDNA from Arabidopsis thaliana.</title>
        <authorList>
            <person name="Brover V.V."/>
            <person name="Troukhan M.E."/>
            <person name="Alexandrov N.A."/>
            <person name="Lu Y.-P."/>
            <person name="Flavell R.B."/>
            <person name="Feldmann K.A."/>
        </authorList>
    </citation>
    <scope>NUCLEOTIDE SEQUENCE [LARGE SCALE MRNA]</scope>
</reference>
<reference key="7">
    <citation type="journal article" date="2006" name="Plant J.">
        <title>Two cell-cycle regulated SET-domain proteins interact with proliferating cell nuclear antigen (PCNA) in Arabidopsis.</title>
        <authorList>
            <person name="Raynaud C."/>
            <person name="Sozzani R."/>
            <person name="Glab N."/>
            <person name="Domenichini S."/>
            <person name="Perennes C."/>
            <person name="Cella R."/>
            <person name="Kondorosi E."/>
            <person name="Bergounioux C."/>
        </authorList>
    </citation>
    <scope>INTERACTION WITH ATXR5 AND ATXR6</scope>
</reference>
<reference key="8">
    <citation type="journal article" date="2008" name="Plant J.">
        <title>Arabidopsis thaliana Y-family DNA polymerase eta catalyses translesion synthesis and interacts functionally with PCNA2.</title>
        <authorList>
            <person name="Anderson H.J."/>
            <person name="Vonarx E.J."/>
            <person name="Pastushok L."/>
            <person name="Nakagawa M."/>
            <person name="Katafuchi A."/>
            <person name="Gruz P."/>
            <person name="Di Rubbo A."/>
            <person name="Grice D.M."/>
            <person name="Osmond M.J."/>
            <person name="Sakamoto A.N."/>
            <person name="Nohmi T."/>
            <person name="Xiao W."/>
            <person name="Kunz B.A."/>
        </authorList>
    </citation>
    <scope>INTERACTION WITH POLH</scope>
</reference>
<reference key="9">
    <citation type="journal article" date="2009" name="Protein Sci.">
        <title>Crystal structures of the Arabidopsis thaliana proliferating cell nuclear antigen 1 and 2 proteins complexed with the human p21 C-terminal segment.</title>
        <authorList>
            <person name="Strzalka W."/>
            <person name="Oyama T."/>
            <person name="Tori K."/>
            <person name="Morikawa K."/>
        </authorList>
    </citation>
    <scope>X-RAY CRYSTALLOGRAPHY (2.00 ANGSTROMS) OF 1-256 IN COMPLEX WITH HUMAN P21 PEPTIDE</scope>
    <scope>SUBUNIT</scope>
</reference>
<protein>
    <recommendedName>
        <fullName>Proliferating cellular nuclear antigen 1</fullName>
        <shortName>PCNA 1</shortName>
    </recommendedName>
</protein>
<feature type="chain" id="PRO_0000149177" description="Proliferating cellular nuclear antigen 1">
    <location>
        <begin position="1"/>
        <end position="263"/>
    </location>
</feature>
<feature type="DNA-binding region" evidence="2">
    <location>
        <begin position="61"/>
        <end position="80"/>
    </location>
</feature>
<feature type="sequence conflict" description="In Ref. 1; AAF40018 and 2; ABU25233." evidence="6" ref="1 2">
    <original>V</original>
    <variation>A</variation>
    <location>
        <position position="48"/>
    </location>
</feature>
<feature type="strand" evidence="7">
    <location>
        <begin position="2"/>
        <end position="7"/>
    </location>
</feature>
<feature type="helix" evidence="7">
    <location>
        <begin position="10"/>
        <end position="19"/>
    </location>
</feature>
<feature type="turn" evidence="7">
    <location>
        <begin position="20"/>
        <end position="22"/>
    </location>
</feature>
<feature type="strand" evidence="7">
    <location>
        <begin position="24"/>
        <end position="31"/>
    </location>
</feature>
<feature type="strand" evidence="7">
    <location>
        <begin position="34"/>
        <end position="40"/>
    </location>
</feature>
<feature type="strand" evidence="7">
    <location>
        <begin position="44"/>
        <end position="53"/>
    </location>
</feature>
<feature type="helix" evidence="7">
    <location>
        <begin position="54"/>
        <end position="56"/>
    </location>
</feature>
<feature type="strand" evidence="7">
    <location>
        <begin position="57"/>
        <end position="64"/>
    </location>
</feature>
<feature type="strand" evidence="7">
    <location>
        <begin position="66"/>
        <end position="71"/>
    </location>
</feature>
<feature type="helix" evidence="7">
    <location>
        <begin position="72"/>
        <end position="80"/>
    </location>
</feature>
<feature type="strand" evidence="7">
    <location>
        <begin position="87"/>
        <end position="92"/>
    </location>
</feature>
<feature type="strand" evidence="7">
    <location>
        <begin position="97"/>
        <end position="104"/>
    </location>
</feature>
<feature type="strand" evidence="7">
    <location>
        <begin position="111"/>
        <end position="117"/>
    </location>
</feature>
<feature type="strand" evidence="7">
    <location>
        <begin position="134"/>
        <end position="140"/>
    </location>
</feature>
<feature type="helix" evidence="7">
    <location>
        <begin position="141"/>
        <end position="152"/>
    </location>
</feature>
<feature type="strand" evidence="7">
    <location>
        <begin position="156"/>
        <end position="163"/>
    </location>
</feature>
<feature type="strand" evidence="7">
    <location>
        <begin position="166"/>
        <end position="173"/>
    </location>
</feature>
<feature type="strand" evidence="7">
    <location>
        <begin position="176"/>
        <end position="182"/>
    </location>
</feature>
<feature type="helix" evidence="7">
    <location>
        <begin position="191"/>
        <end position="193"/>
    </location>
</feature>
<feature type="strand" evidence="7">
    <location>
        <begin position="196"/>
        <end position="201"/>
    </location>
</feature>
<feature type="strand" evidence="7">
    <location>
        <begin position="203"/>
        <end position="208"/>
    </location>
</feature>
<feature type="helix" evidence="7">
    <location>
        <begin position="209"/>
        <end position="215"/>
    </location>
</feature>
<feature type="helix" evidence="7">
    <location>
        <begin position="216"/>
        <end position="221"/>
    </location>
</feature>
<feature type="strand" evidence="7">
    <location>
        <begin position="223"/>
        <end position="229"/>
    </location>
</feature>
<feature type="strand" evidence="7">
    <location>
        <begin position="235"/>
        <end position="241"/>
    </location>
</feature>
<feature type="turn" evidence="7">
    <location>
        <begin position="242"/>
        <end position="244"/>
    </location>
</feature>
<feature type="strand" evidence="7">
    <location>
        <begin position="245"/>
        <end position="251"/>
    </location>
</feature>
<feature type="strand" evidence="8">
    <location>
        <begin position="254"/>
        <end position="256"/>
    </location>
</feature>
<dbReference type="EMBL" id="AF083220">
    <property type="protein sequence ID" value="AAF40018.1"/>
    <property type="molecule type" value="mRNA"/>
</dbReference>
<dbReference type="EMBL" id="EU072917">
    <property type="protein sequence ID" value="ABU25233.1"/>
    <property type="molecule type" value="mRNA"/>
</dbReference>
<dbReference type="EMBL" id="AC022464">
    <property type="protein sequence ID" value="AAF79566.1"/>
    <property type="molecule type" value="Genomic_DNA"/>
</dbReference>
<dbReference type="EMBL" id="CP002684">
    <property type="protein sequence ID" value="AEE28115.1"/>
    <property type="molecule type" value="Genomic_DNA"/>
</dbReference>
<dbReference type="EMBL" id="AF462821">
    <property type="protein sequence ID" value="AAL58911.1"/>
    <property type="molecule type" value="mRNA"/>
</dbReference>
<dbReference type="EMBL" id="AY098969">
    <property type="protein sequence ID" value="AAM19979.1"/>
    <property type="molecule type" value="mRNA"/>
</dbReference>
<dbReference type="EMBL" id="AY086852">
    <property type="protein sequence ID" value="AAM63900.1"/>
    <property type="molecule type" value="mRNA"/>
</dbReference>
<dbReference type="RefSeq" id="NP_172217.1">
    <property type="nucleotide sequence ID" value="NM_100611.4"/>
</dbReference>
<dbReference type="PDB" id="2ZVV">
    <property type="method" value="X-ray"/>
    <property type="resolution" value="2.00 A"/>
    <property type="chains" value="A/B=1-256"/>
</dbReference>
<dbReference type="PDB" id="6O09">
    <property type="method" value="X-ray"/>
    <property type="resolution" value="2.06 A"/>
    <property type="chains" value="A/C/D/F/H/K=1-263"/>
</dbReference>
<dbReference type="PDBsum" id="2ZVV"/>
<dbReference type="PDBsum" id="6O09"/>
<dbReference type="SMR" id="Q9M7Q7"/>
<dbReference type="BioGRID" id="22490">
    <property type="interactions" value="46"/>
</dbReference>
<dbReference type="FunCoup" id="Q9M7Q7">
    <property type="interactions" value="3638"/>
</dbReference>
<dbReference type="IntAct" id="Q9M7Q7">
    <property type="interactions" value="7"/>
</dbReference>
<dbReference type="STRING" id="3702.Q9M7Q7"/>
<dbReference type="iPTMnet" id="Q9M7Q7"/>
<dbReference type="PaxDb" id="3702-AT1G07370.1"/>
<dbReference type="ProteomicsDB" id="236846"/>
<dbReference type="EnsemblPlants" id="AT1G07370.1">
    <property type="protein sequence ID" value="AT1G07370.1"/>
    <property type="gene ID" value="AT1G07370"/>
</dbReference>
<dbReference type="GeneID" id="837249"/>
<dbReference type="Gramene" id="AT1G07370.1">
    <property type="protein sequence ID" value="AT1G07370.1"/>
    <property type="gene ID" value="AT1G07370"/>
</dbReference>
<dbReference type="KEGG" id="ath:AT1G07370"/>
<dbReference type="Araport" id="AT1G07370"/>
<dbReference type="TAIR" id="AT1G07370">
    <property type="gene designation" value="PCNA1"/>
</dbReference>
<dbReference type="eggNOG" id="KOG1636">
    <property type="taxonomic scope" value="Eukaryota"/>
</dbReference>
<dbReference type="HOGENOM" id="CLU_043978_3_0_1"/>
<dbReference type="InParanoid" id="Q9M7Q7"/>
<dbReference type="OMA" id="MDNSHIS"/>
<dbReference type="OrthoDB" id="534348at2759"/>
<dbReference type="PhylomeDB" id="Q9M7Q7"/>
<dbReference type="CD-CODE" id="4299E36E">
    <property type="entry name" value="Nucleolus"/>
</dbReference>
<dbReference type="EvolutionaryTrace" id="Q9M7Q7"/>
<dbReference type="PRO" id="PR:Q9M7Q7"/>
<dbReference type="Proteomes" id="UP000006548">
    <property type="component" value="Chromosome 1"/>
</dbReference>
<dbReference type="ExpressionAtlas" id="Q9M7Q7">
    <property type="expression patterns" value="baseline and differential"/>
</dbReference>
<dbReference type="GO" id="GO:0005737">
    <property type="term" value="C:cytoplasm"/>
    <property type="evidence" value="ECO:0007005"/>
    <property type="project" value="TAIR"/>
</dbReference>
<dbReference type="GO" id="GO:0005829">
    <property type="term" value="C:cytosol"/>
    <property type="evidence" value="ECO:0007005"/>
    <property type="project" value="TAIR"/>
</dbReference>
<dbReference type="GO" id="GO:0005730">
    <property type="term" value="C:nucleolus"/>
    <property type="evidence" value="ECO:0007005"/>
    <property type="project" value="TAIR"/>
</dbReference>
<dbReference type="GO" id="GO:0005634">
    <property type="term" value="C:nucleus"/>
    <property type="evidence" value="ECO:0007005"/>
    <property type="project" value="TAIR"/>
</dbReference>
<dbReference type="GO" id="GO:0003677">
    <property type="term" value="F:DNA binding"/>
    <property type="evidence" value="ECO:0007669"/>
    <property type="project" value="UniProtKB-KW"/>
</dbReference>
<dbReference type="GO" id="GO:0030337">
    <property type="term" value="F:DNA polymerase processivity factor activity"/>
    <property type="evidence" value="ECO:0007669"/>
    <property type="project" value="InterPro"/>
</dbReference>
<dbReference type="GO" id="GO:0006260">
    <property type="term" value="P:DNA replication"/>
    <property type="evidence" value="ECO:0007669"/>
    <property type="project" value="UniProtKB-KW"/>
</dbReference>
<dbReference type="GO" id="GO:0051726">
    <property type="term" value="P:regulation of cell cycle"/>
    <property type="evidence" value="ECO:0000250"/>
    <property type="project" value="TAIR"/>
</dbReference>
<dbReference type="GO" id="GO:0006275">
    <property type="term" value="P:regulation of DNA replication"/>
    <property type="evidence" value="ECO:0007669"/>
    <property type="project" value="InterPro"/>
</dbReference>
<dbReference type="CDD" id="cd00577">
    <property type="entry name" value="PCNA"/>
    <property type="match status" value="1"/>
</dbReference>
<dbReference type="FunFam" id="3.70.10.10:FF:000001">
    <property type="entry name" value="Proliferating cell nuclear antigen"/>
    <property type="match status" value="1"/>
</dbReference>
<dbReference type="Gene3D" id="3.70.10.10">
    <property type="match status" value="1"/>
</dbReference>
<dbReference type="HAMAP" id="MF_00317">
    <property type="entry name" value="DNApol_clamp_arch"/>
    <property type="match status" value="1"/>
</dbReference>
<dbReference type="IDEAL" id="IID50102"/>
<dbReference type="InterPro" id="IPR046938">
    <property type="entry name" value="DNA_clamp_sf"/>
</dbReference>
<dbReference type="InterPro" id="IPR000730">
    <property type="entry name" value="Pr_cel_nuc_antig"/>
</dbReference>
<dbReference type="InterPro" id="IPR022649">
    <property type="entry name" value="Pr_cel_nuc_antig_C"/>
</dbReference>
<dbReference type="InterPro" id="IPR022659">
    <property type="entry name" value="Pr_cel_nuc_antig_CS"/>
</dbReference>
<dbReference type="InterPro" id="IPR022648">
    <property type="entry name" value="Pr_cel_nuc_antig_N"/>
</dbReference>
<dbReference type="NCBIfam" id="TIGR00590">
    <property type="entry name" value="pcna"/>
    <property type="match status" value="1"/>
</dbReference>
<dbReference type="PANTHER" id="PTHR11352">
    <property type="entry name" value="PROLIFERATING CELL NUCLEAR ANTIGEN"/>
    <property type="match status" value="1"/>
</dbReference>
<dbReference type="PANTHER" id="PTHR11352:SF0">
    <property type="entry name" value="PROLIFERATING CELL NUCLEAR ANTIGEN"/>
    <property type="match status" value="1"/>
</dbReference>
<dbReference type="Pfam" id="PF02747">
    <property type="entry name" value="PCNA_C"/>
    <property type="match status" value="1"/>
</dbReference>
<dbReference type="Pfam" id="PF00705">
    <property type="entry name" value="PCNA_N"/>
    <property type="match status" value="1"/>
</dbReference>
<dbReference type="PRINTS" id="PR00339">
    <property type="entry name" value="PCNACYCLIN"/>
</dbReference>
<dbReference type="SUPFAM" id="SSF55979">
    <property type="entry name" value="DNA clamp"/>
    <property type="match status" value="2"/>
</dbReference>
<dbReference type="PROSITE" id="PS01251">
    <property type="entry name" value="PCNA_1"/>
    <property type="match status" value="1"/>
</dbReference>
<dbReference type="PROSITE" id="PS00293">
    <property type="entry name" value="PCNA_2"/>
    <property type="match status" value="1"/>
</dbReference>
<name>PCNA1_ARATH</name>
<gene>
    <name type="primary">PCNA</name>
    <name type="synonym">PCNA1</name>
    <name type="ordered locus">At1g07370</name>
    <name type="ORF">F22G5.29</name>
</gene>
<accession>Q9M7Q7</accession>
<accession>A7UIK5</accession>
<accession>Q9LNV6</accession>
<proteinExistence type="evidence at protein level"/>